<feature type="chain" id="PRO_0000064039" description="Probable aquaporin PIP2-6">
    <location>
        <begin position="1"/>
        <end position="282"/>
    </location>
</feature>
<feature type="transmembrane region" description="Helical; Name=1" evidence="2">
    <location>
        <begin position="39"/>
        <end position="59"/>
    </location>
</feature>
<feature type="transmembrane region" description="Helical; Name=2" evidence="2">
    <location>
        <begin position="76"/>
        <end position="96"/>
    </location>
</feature>
<feature type="transmembrane region" description="Helical; Name=3" evidence="2">
    <location>
        <begin position="121"/>
        <end position="141"/>
    </location>
</feature>
<feature type="transmembrane region" description="Helical; Name=4" evidence="2">
    <location>
        <begin position="163"/>
        <end position="183"/>
    </location>
</feature>
<feature type="transmembrane region" description="Helical; Name=5" evidence="2">
    <location>
        <begin position="197"/>
        <end position="217"/>
    </location>
</feature>
<feature type="transmembrane region" description="Helical; Name=6" evidence="2">
    <location>
        <begin position="245"/>
        <end position="265"/>
    </location>
</feature>
<feature type="short sequence motif" description="NPA 1">
    <location>
        <begin position="102"/>
        <end position="104"/>
    </location>
</feature>
<feature type="short sequence motif" description="NPA 2">
    <location>
        <begin position="223"/>
        <end position="225"/>
    </location>
</feature>
<reference key="1">
    <citation type="journal article" date="2002" name="Nature">
        <title>Sequence and analysis of rice chromosome 4.</title>
        <authorList>
            <person name="Feng Q."/>
            <person name="Zhang Y."/>
            <person name="Hao P."/>
            <person name="Wang S."/>
            <person name="Fu G."/>
            <person name="Huang Y."/>
            <person name="Li Y."/>
            <person name="Zhu J."/>
            <person name="Liu Y."/>
            <person name="Hu X."/>
            <person name="Jia P."/>
            <person name="Zhang Y."/>
            <person name="Zhao Q."/>
            <person name="Ying K."/>
            <person name="Yu S."/>
            <person name="Tang Y."/>
            <person name="Weng Q."/>
            <person name="Zhang L."/>
            <person name="Lu Y."/>
            <person name="Mu J."/>
            <person name="Lu Y."/>
            <person name="Zhang L.S."/>
            <person name="Yu Z."/>
            <person name="Fan D."/>
            <person name="Liu X."/>
            <person name="Lu T."/>
            <person name="Li C."/>
            <person name="Wu Y."/>
            <person name="Sun T."/>
            <person name="Lei H."/>
            <person name="Li T."/>
            <person name="Hu H."/>
            <person name="Guan J."/>
            <person name="Wu M."/>
            <person name="Zhang R."/>
            <person name="Zhou B."/>
            <person name="Chen Z."/>
            <person name="Chen L."/>
            <person name="Jin Z."/>
            <person name="Wang R."/>
            <person name="Yin H."/>
            <person name="Cai Z."/>
            <person name="Ren S."/>
            <person name="Lv G."/>
            <person name="Gu W."/>
            <person name="Zhu G."/>
            <person name="Tu Y."/>
            <person name="Jia J."/>
            <person name="Zhang Y."/>
            <person name="Chen J."/>
            <person name="Kang H."/>
            <person name="Chen X."/>
            <person name="Shao C."/>
            <person name="Sun Y."/>
            <person name="Hu Q."/>
            <person name="Zhang X."/>
            <person name="Zhang W."/>
            <person name="Wang L."/>
            <person name="Ding C."/>
            <person name="Sheng H."/>
            <person name="Gu J."/>
            <person name="Chen S."/>
            <person name="Ni L."/>
            <person name="Zhu F."/>
            <person name="Chen W."/>
            <person name="Lan L."/>
            <person name="Lai Y."/>
            <person name="Cheng Z."/>
            <person name="Gu M."/>
            <person name="Jiang J."/>
            <person name="Li J."/>
            <person name="Hong G."/>
            <person name="Xue Y."/>
            <person name="Han B."/>
        </authorList>
    </citation>
    <scope>NUCLEOTIDE SEQUENCE [LARGE SCALE GENOMIC DNA]</scope>
    <source>
        <strain>cv. Nipponbare</strain>
    </source>
</reference>
<reference key="2">
    <citation type="journal article" date="2005" name="Nature">
        <title>The map-based sequence of the rice genome.</title>
        <authorList>
            <consortium name="International rice genome sequencing project (IRGSP)"/>
        </authorList>
    </citation>
    <scope>NUCLEOTIDE SEQUENCE [LARGE SCALE GENOMIC DNA]</scope>
    <source>
        <strain>cv. Nipponbare</strain>
    </source>
</reference>
<reference key="3">
    <citation type="journal article" date="2008" name="Nucleic Acids Res.">
        <title>The rice annotation project database (RAP-DB): 2008 update.</title>
        <authorList>
            <consortium name="The rice annotation project (RAP)"/>
        </authorList>
    </citation>
    <scope>GENOME REANNOTATION</scope>
    <source>
        <strain>cv. Nipponbare</strain>
    </source>
</reference>
<reference key="4">
    <citation type="journal article" date="2013" name="Rice">
        <title>Improvement of the Oryza sativa Nipponbare reference genome using next generation sequence and optical map data.</title>
        <authorList>
            <person name="Kawahara Y."/>
            <person name="de la Bastide M."/>
            <person name="Hamilton J.P."/>
            <person name="Kanamori H."/>
            <person name="McCombie W.R."/>
            <person name="Ouyang S."/>
            <person name="Schwartz D.C."/>
            <person name="Tanaka T."/>
            <person name="Wu J."/>
            <person name="Zhou S."/>
            <person name="Childs K.L."/>
            <person name="Davidson R.M."/>
            <person name="Lin H."/>
            <person name="Quesada-Ocampo L."/>
            <person name="Vaillancourt B."/>
            <person name="Sakai H."/>
            <person name="Lee S.S."/>
            <person name="Kim J."/>
            <person name="Numa H."/>
            <person name="Itoh T."/>
            <person name="Buell C.R."/>
            <person name="Matsumoto T."/>
        </authorList>
    </citation>
    <scope>GENOME REANNOTATION</scope>
    <source>
        <strain>cv. Nipponbare</strain>
    </source>
</reference>
<reference key="5">
    <citation type="journal article" date="2003" name="Science">
        <title>Collection, mapping, and annotation of over 28,000 cDNA clones from japonica rice.</title>
        <authorList>
            <consortium name="The rice full-length cDNA consortium"/>
        </authorList>
    </citation>
    <scope>NUCLEOTIDE SEQUENCE [LARGE SCALE MRNA]</scope>
    <source>
        <strain>cv. Nipponbare</strain>
    </source>
</reference>
<reference key="6">
    <citation type="journal article" date="2005" name="Plant Cell Physiol.">
        <title>Identification of 33 rice aquaporin genes and analysis of their expression and function.</title>
        <authorList>
            <person name="Sakurai J."/>
            <person name="Ishikawa F."/>
            <person name="Yamaguchi T."/>
            <person name="Uemura M."/>
            <person name="Maeshima M."/>
        </authorList>
    </citation>
    <scope>NOMENCLATURE</scope>
    <scope>TISSUE SPECIFICITY</scope>
    <scope>INDUCTION</scope>
</reference>
<gene>
    <name type="primary">PIP2-6</name>
    <name type="ordered locus">Os04g0233400</name>
    <name type="ordered locus">LOC_Os04g16450</name>
    <name type="ORF">OSJNBb0093G06.10</name>
</gene>
<name>PIP26_ORYSJ</name>
<sequence>MSKEVSEEPEHVRPKDYTDPPPAPLFDVGELRLWSFYRALIAEFIATLLFLYITVATVIGYKVQSSADQCGGVGTLGIAWAFGGMIFILVYCTAGISGGHINPAVTFGLLLARKVSVIRAVMYIVAQCLGGIVGVGIVKGIMKHQYNANGGGANMVASGYSTGTALGAEIIGTFVLVYTVFSATDPKRNARDSHVPVLAPLPIGFAVFMVHLATIPITGTGINPARSIGAAVIYNQKKAWDDHWIFWAGPFIGALAAAAYHQYILRAAAIKALGSFRSNPSN</sequence>
<keyword id="KW-1003">Cell membrane</keyword>
<keyword id="KW-0472">Membrane</keyword>
<keyword id="KW-1185">Reference proteome</keyword>
<keyword id="KW-0677">Repeat</keyword>
<keyword id="KW-0812">Transmembrane</keyword>
<keyword id="KW-1133">Transmembrane helix</keyword>
<keyword id="KW-0813">Transport</keyword>
<proteinExistence type="evidence at transcript level"/>
<dbReference type="EMBL" id="AL731636">
    <property type="protein sequence ID" value="CAE05002.2"/>
    <property type="molecule type" value="Genomic_DNA"/>
</dbReference>
<dbReference type="EMBL" id="AP008210">
    <property type="protein sequence ID" value="BAF14206.1"/>
    <property type="molecule type" value="Genomic_DNA"/>
</dbReference>
<dbReference type="EMBL" id="AP014960">
    <property type="protein sequence ID" value="BAS88230.1"/>
    <property type="molecule type" value="Genomic_DNA"/>
</dbReference>
<dbReference type="EMBL" id="AK061312">
    <property type="protein sequence ID" value="BAG87850.1"/>
    <property type="molecule type" value="mRNA"/>
</dbReference>
<dbReference type="EMBL" id="AK061491">
    <property type="protein sequence ID" value="BAG87963.1"/>
    <property type="molecule type" value="mRNA"/>
</dbReference>
<dbReference type="EMBL" id="AK102155">
    <property type="protein sequence ID" value="BAG95414.1"/>
    <property type="molecule type" value="mRNA"/>
</dbReference>
<dbReference type="RefSeq" id="XP_015636702.1">
    <property type="nucleotide sequence ID" value="XM_015781216.1"/>
</dbReference>
<dbReference type="SMR" id="Q7XLR1"/>
<dbReference type="FunCoup" id="Q7XLR1">
    <property type="interactions" value="371"/>
</dbReference>
<dbReference type="STRING" id="39947.Q7XLR1"/>
<dbReference type="PaxDb" id="39947-Q7XLR1"/>
<dbReference type="EnsemblPlants" id="Os04t0233400-01">
    <property type="protein sequence ID" value="Os04t0233400-01"/>
    <property type="gene ID" value="Os04g0233400"/>
</dbReference>
<dbReference type="Gramene" id="Os04t0233400-01">
    <property type="protein sequence ID" value="Os04t0233400-01"/>
    <property type="gene ID" value="Os04g0233400"/>
</dbReference>
<dbReference type="KEGG" id="dosa:Os04g0233400"/>
<dbReference type="eggNOG" id="KOG0223">
    <property type="taxonomic scope" value="Eukaryota"/>
</dbReference>
<dbReference type="InParanoid" id="Q7XLR1"/>
<dbReference type="OMA" id="HHTLRTE"/>
<dbReference type="OrthoDB" id="3222at2759"/>
<dbReference type="PlantReactome" id="R-OSA-9618218">
    <property type="pathway name" value="Arsenic uptake and detoxification"/>
</dbReference>
<dbReference type="Proteomes" id="UP000000763">
    <property type="component" value="Chromosome 4"/>
</dbReference>
<dbReference type="Proteomes" id="UP000059680">
    <property type="component" value="Chromosome 4"/>
</dbReference>
<dbReference type="ExpressionAtlas" id="Q7XLR1">
    <property type="expression patterns" value="baseline and differential"/>
</dbReference>
<dbReference type="GO" id="GO:0005886">
    <property type="term" value="C:plasma membrane"/>
    <property type="evidence" value="ECO:0000318"/>
    <property type="project" value="GO_Central"/>
</dbReference>
<dbReference type="GO" id="GO:0015250">
    <property type="term" value="F:water channel activity"/>
    <property type="evidence" value="ECO:0000318"/>
    <property type="project" value="GO_Central"/>
</dbReference>
<dbReference type="CDD" id="cd00333">
    <property type="entry name" value="MIP"/>
    <property type="match status" value="1"/>
</dbReference>
<dbReference type="FunFam" id="1.20.1080.10:FF:000001">
    <property type="entry name" value="Probable aquaporin PIP1-2"/>
    <property type="match status" value="1"/>
</dbReference>
<dbReference type="Gene3D" id="1.20.1080.10">
    <property type="entry name" value="Glycerol uptake facilitator protein"/>
    <property type="match status" value="1"/>
</dbReference>
<dbReference type="InterPro" id="IPR023271">
    <property type="entry name" value="Aquaporin-like"/>
</dbReference>
<dbReference type="InterPro" id="IPR034294">
    <property type="entry name" value="Aquaporin_transptr"/>
</dbReference>
<dbReference type="InterPro" id="IPR000425">
    <property type="entry name" value="MIP"/>
</dbReference>
<dbReference type="InterPro" id="IPR022357">
    <property type="entry name" value="MIP_CS"/>
</dbReference>
<dbReference type="NCBIfam" id="TIGR00861">
    <property type="entry name" value="MIP"/>
    <property type="match status" value="1"/>
</dbReference>
<dbReference type="PANTHER" id="PTHR45687">
    <property type="entry name" value="AQUAPORIN OR AQUAGLYCEROPORIN RELATED"/>
    <property type="match status" value="1"/>
</dbReference>
<dbReference type="Pfam" id="PF00230">
    <property type="entry name" value="MIP"/>
    <property type="match status" value="1"/>
</dbReference>
<dbReference type="PRINTS" id="PR00783">
    <property type="entry name" value="MINTRINSICP"/>
</dbReference>
<dbReference type="SUPFAM" id="SSF81338">
    <property type="entry name" value="Aquaporin-like"/>
    <property type="match status" value="1"/>
</dbReference>
<dbReference type="PROSITE" id="PS00221">
    <property type="entry name" value="MIP"/>
    <property type="match status" value="1"/>
</dbReference>
<protein>
    <recommendedName>
        <fullName>Probable aquaporin PIP2-6</fullName>
    </recommendedName>
    <alternativeName>
        <fullName>OsPIP2;6</fullName>
    </alternativeName>
    <alternativeName>
        <fullName>Plasma membrane intrinsic protein 2-6</fullName>
    </alternativeName>
</protein>
<organism>
    <name type="scientific">Oryza sativa subsp. japonica</name>
    <name type="common">Rice</name>
    <dbReference type="NCBI Taxonomy" id="39947"/>
    <lineage>
        <taxon>Eukaryota</taxon>
        <taxon>Viridiplantae</taxon>
        <taxon>Streptophyta</taxon>
        <taxon>Embryophyta</taxon>
        <taxon>Tracheophyta</taxon>
        <taxon>Spermatophyta</taxon>
        <taxon>Magnoliopsida</taxon>
        <taxon>Liliopsida</taxon>
        <taxon>Poales</taxon>
        <taxon>Poaceae</taxon>
        <taxon>BOP clade</taxon>
        <taxon>Oryzoideae</taxon>
        <taxon>Oryzeae</taxon>
        <taxon>Oryzinae</taxon>
        <taxon>Oryza</taxon>
        <taxon>Oryza sativa</taxon>
    </lineage>
</organism>
<evidence type="ECO:0000250" key="1"/>
<evidence type="ECO:0000255" key="2"/>
<evidence type="ECO:0000269" key="3">
    <source>
    </source>
</evidence>
<evidence type="ECO:0000305" key="4"/>
<accession>Q7XLR1</accession>
<accession>B7E653</accession>
<accession>Q0JEN1</accession>
<comment type="function">
    <text evidence="1">Aquaporins facilitate the transport of water and small neutral solutes across cell membranes.</text>
</comment>
<comment type="subcellular location">
    <subcellularLocation>
        <location evidence="1">Cell membrane</location>
        <topology evidence="1">Multi-pass membrane protein</topology>
    </subcellularLocation>
</comment>
<comment type="tissue specificity">
    <text evidence="3">Expressed in roots and leaves.</text>
</comment>
<comment type="induction">
    <text evidence="3">Down-regulated by chilling.</text>
</comment>
<comment type="domain">
    <text>Aquaporins contain two tandem repeats each containing three membrane-spanning domains and a pore-forming loop with the signature motif Asn-Pro-Ala (NPA).</text>
</comment>
<comment type="similarity">
    <text evidence="4">Belongs to the MIP/aquaporin (TC 1.A.8) family. PIP (TC 1.A.8.11) subfamily.</text>
</comment>